<comment type="function">
    <text evidence="1">Methylates ribosomal protein L11.</text>
</comment>
<comment type="catalytic activity">
    <reaction evidence="1">
        <text>L-lysyl-[protein] + 3 S-adenosyl-L-methionine = N(6),N(6),N(6)-trimethyl-L-lysyl-[protein] + 3 S-adenosyl-L-homocysteine + 3 H(+)</text>
        <dbReference type="Rhea" id="RHEA:54192"/>
        <dbReference type="Rhea" id="RHEA-COMP:9752"/>
        <dbReference type="Rhea" id="RHEA-COMP:13826"/>
        <dbReference type="ChEBI" id="CHEBI:15378"/>
        <dbReference type="ChEBI" id="CHEBI:29969"/>
        <dbReference type="ChEBI" id="CHEBI:57856"/>
        <dbReference type="ChEBI" id="CHEBI:59789"/>
        <dbReference type="ChEBI" id="CHEBI:61961"/>
    </reaction>
</comment>
<comment type="subcellular location">
    <subcellularLocation>
        <location evidence="1">Cytoplasm</location>
    </subcellularLocation>
</comment>
<comment type="similarity">
    <text evidence="1">Belongs to the methyltransferase superfamily. PrmA family.</text>
</comment>
<reference key="1">
    <citation type="submission" date="2005-09" db="EMBL/GenBank/DDBJ databases">
        <title>Complete genome sequence of Clostridium kluyveri and comparative genomics of Clostridia species.</title>
        <authorList>
            <person name="Inui M."/>
            <person name="Nonaka H."/>
            <person name="Shinoda Y."/>
            <person name="Ikenaga Y."/>
            <person name="Abe M."/>
            <person name="Naito K."/>
            <person name="Vertes A.A."/>
            <person name="Yukawa H."/>
        </authorList>
    </citation>
    <scope>NUCLEOTIDE SEQUENCE [LARGE SCALE GENOMIC DNA]</scope>
    <source>
        <strain>NBRC 12016</strain>
    </source>
</reference>
<proteinExistence type="inferred from homology"/>
<accession>B9E043</accession>
<protein>
    <recommendedName>
        <fullName evidence="1">Ribosomal protein L11 methyltransferase</fullName>
        <shortName evidence="1">L11 Mtase</shortName>
        <ecNumber evidence="1">2.1.1.-</ecNumber>
    </recommendedName>
</protein>
<gene>
    <name evidence="1" type="primary">prmA</name>
    <name type="ordered locus">CKR_0817</name>
</gene>
<organism>
    <name type="scientific">Clostridium kluyveri (strain NBRC 12016)</name>
    <dbReference type="NCBI Taxonomy" id="583346"/>
    <lineage>
        <taxon>Bacteria</taxon>
        <taxon>Bacillati</taxon>
        <taxon>Bacillota</taxon>
        <taxon>Clostridia</taxon>
        <taxon>Eubacteriales</taxon>
        <taxon>Clostridiaceae</taxon>
        <taxon>Clostridium</taxon>
    </lineage>
</organism>
<feature type="chain" id="PRO_1000192608" description="Ribosomal protein L11 methyltransferase">
    <location>
        <begin position="1"/>
        <end position="312"/>
    </location>
</feature>
<feature type="binding site" evidence="1">
    <location>
        <position position="163"/>
    </location>
    <ligand>
        <name>S-adenosyl-L-methionine</name>
        <dbReference type="ChEBI" id="CHEBI:59789"/>
    </ligand>
</feature>
<feature type="binding site" evidence="1">
    <location>
        <position position="184"/>
    </location>
    <ligand>
        <name>S-adenosyl-L-methionine</name>
        <dbReference type="ChEBI" id="CHEBI:59789"/>
    </ligand>
</feature>
<feature type="binding site" evidence="1">
    <location>
        <position position="206"/>
    </location>
    <ligand>
        <name>S-adenosyl-L-methionine</name>
        <dbReference type="ChEBI" id="CHEBI:59789"/>
    </ligand>
</feature>
<feature type="binding site" evidence="1">
    <location>
        <position position="248"/>
    </location>
    <ligand>
        <name>S-adenosyl-L-methionine</name>
        <dbReference type="ChEBI" id="CHEBI:59789"/>
    </ligand>
</feature>
<evidence type="ECO:0000255" key="1">
    <source>
        <dbReference type="HAMAP-Rule" id="MF_00735"/>
    </source>
</evidence>
<keyword id="KW-0963">Cytoplasm</keyword>
<keyword id="KW-0489">Methyltransferase</keyword>
<keyword id="KW-0949">S-adenosyl-L-methionine</keyword>
<keyword id="KW-0808">Transferase</keyword>
<sequence length="312" mass="35121">MSKEWIEVSIIVSSEAVEAVSGILYNTEVEGISIEDTKDIEFKKKHPGDWDYFDESLLKVEEGAVIKAYYRESESFYGYLKYIRHNINNLENLGIDKGKGLVVVNKVNEEDWENGWKKYYKPYRAGEKIVIKPLWEEYENKKQDIVVEIDPGMAFGTGTHETTKMCIKALEKYVRPESNVFDIGTGSGILAIAASKLGAKEVTAVDLDPVAVESALKNISYNNIKNIKVFHGNLMEGVHGKADILVINIIADVILSLTEEVKKFLVSEGIFISSGIIIDRKEEVVENLQNNGFCIREINEDGEWVCIVSTIK</sequence>
<name>PRMA_CLOK1</name>
<dbReference type="EC" id="2.1.1.-" evidence="1"/>
<dbReference type="EMBL" id="AP009049">
    <property type="protein sequence ID" value="BAH05868.1"/>
    <property type="molecule type" value="Genomic_DNA"/>
</dbReference>
<dbReference type="RefSeq" id="WP_012101284.1">
    <property type="nucleotide sequence ID" value="NC_011837.1"/>
</dbReference>
<dbReference type="SMR" id="B9E043"/>
<dbReference type="KEGG" id="ckr:CKR_0817"/>
<dbReference type="HOGENOM" id="CLU_049382_0_1_9"/>
<dbReference type="Proteomes" id="UP000007969">
    <property type="component" value="Chromosome"/>
</dbReference>
<dbReference type="GO" id="GO:0005737">
    <property type="term" value="C:cytoplasm"/>
    <property type="evidence" value="ECO:0007669"/>
    <property type="project" value="UniProtKB-SubCell"/>
</dbReference>
<dbReference type="GO" id="GO:0016279">
    <property type="term" value="F:protein-lysine N-methyltransferase activity"/>
    <property type="evidence" value="ECO:0007669"/>
    <property type="project" value="RHEA"/>
</dbReference>
<dbReference type="GO" id="GO:0032259">
    <property type="term" value="P:methylation"/>
    <property type="evidence" value="ECO:0007669"/>
    <property type="project" value="UniProtKB-KW"/>
</dbReference>
<dbReference type="CDD" id="cd02440">
    <property type="entry name" value="AdoMet_MTases"/>
    <property type="match status" value="1"/>
</dbReference>
<dbReference type="Gene3D" id="3.40.50.150">
    <property type="entry name" value="Vaccinia Virus protein VP39"/>
    <property type="match status" value="1"/>
</dbReference>
<dbReference type="HAMAP" id="MF_00735">
    <property type="entry name" value="Methyltr_PrmA"/>
    <property type="match status" value="1"/>
</dbReference>
<dbReference type="InterPro" id="IPR050078">
    <property type="entry name" value="Ribosomal_L11_MeTrfase_PrmA"/>
</dbReference>
<dbReference type="InterPro" id="IPR004498">
    <property type="entry name" value="Ribosomal_PrmA_MeTrfase"/>
</dbReference>
<dbReference type="InterPro" id="IPR029063">
    <property type="entry name" value="SAM-dependent_MTases_sf"/>
</dbReference>
<dbReference type="NCBIfam" id="TIGR00406">
    <property type="entry name" value="prmA"/>
    <property type="match status" value="1"/>
</dbReference>
<dbReference type="PANTHER" id="PTHR43648">
    <property type="entry name" value="ELECTRON TRANSFER FLAVOPROTEIN BETA SUBUNIT LYSINE METHYLTRANSFERASE"/>
    <property type="match status" value="1"/>
</dbReference>
<dbReference type="PANTHER" id="PTHR43648:SF1">
    <property type="entry name" value="ELECTRON TRANSFER FLAVOPROTEIN BETA SUBUNIT LYSINE METHYLTRANSFERASE"/>
    <property type="match status" value="1"/>
</dbReference>
<dbReference type="Pfam" id="PF06325">
    <property type="entry name" value="PrmA"/>
    <property type="match status" value="1"/>
</dbReference>
<dbReference type="PIRSF" id="PIRSF000401">
    <property type="entry name" value="RPL11_MTase"/>
    <property type="match status" value="1"/>
</dbReference>
<dbReference type="SUPFAM" id="SSF53335">
    <property type="entry name" value="S-adenosyl-L-methionine-dependent methyltransferases"/>
    <property type="match status" value="1"/>
</dbReference>